<organism>
    <name type="scientific">Rattus norvegicus</name>
    <name type="common">Rat</name>
    <dbReference type="NCBI Taxonomy" id="10116"/>
    <lineage>
        <taxon>Eukaryota</taxon>
        <taxon>Metazoa</taxon>
        <taxon>Chordata</taxon>
        <taxon>Craniata</taxon>
        <taxon>Vertebrata</taxon>
        <taxon>Euteleostomi</taxon>
        <taxon>Mammalia</taxon>
        <taxon>Eutheria</taxon>
        <taxon>Euarchontoglires</taxon>
        <taxon>Glires</taxon>
        <taxon>Rodentia</taxon>
        <taxon>Myomorpha</taxon>
        <taxon>Muroidea</taxon>
        <taxon>Muridae</taxon>
        <taxon>Murinae</taxon>
        <taxon>Rattus</taxon>
    </lineage>
</organism>
<dbReference type="EMBL" id="BC099750">
    <property type="protein sequence ID" value="AAH99750.1"/>
    <property type="molecule type" value="mRNA"/>
</dbReference>
<dbReference type="RefSeq" id="NP_001025213.1">
    <property type="nucleotide sequence ID" value="NM_001030042.1"/>
</dbReference>
<dbReference type="SMR" id="Q499V3"/>
<dbReference type="FunCoup" id="Q499V3">
    <property type="interactions" value="652"/>
</dbReference>
<dbReference type="STRING" id="10116.ENSRNOP00000042520"/>
<dbReference type="PhosphoSitePlus" id="Q499V3"/>
<dbReference type="PaxDb" id="10116-ENSRNOP00000042520"/>
<dbReference type="GeneID" id="363924"/>
<dbReference type="KEGG" id="rno:363924"/>
<dbReference type="UCSC" id="RGD:1308223">
    <property type="organism name" value="rat"/>
</dbReference>
<dbReference type="AGR" id="RGD:1308223"/>
<dbReference type="CTD" id="144715"/>
<dbReference type="RGD" id="1308223">
    <property type="gene designation" value="Rad9b"/>
</dbReference>
<dbReference type="VEuPathDB" id="HostDB:ENSRNOG00000021480"/>
<dbReference type="eggNOG" id="KOG2810">
    <property type="taxonomic scope" value="Eukaryota"/>
</dbReference>
<dbReference type="HOGENOM" id="CLU_049242_2_0_1"/>
<dbReference type="InParanoid" id="Q499V3"/>
<dbReference type="PhylomeDB" id="Q499V3"/>
<dbReference type="TreeFam" id="TF101212"/>
<dbReference type="Reactome" id="R-RNO-176187">
    <property type="pathway name" value="Activation of ATR in response to replication stress"/>
</dbReference>
<dbReference type="Reactome" id="R-RNO-5685938">
    <property type="pathway name" value="HDR through Single Strand Annealing (SSA)"/>
</dbReference>
<dbReference type="Reactome" id="R-RNO-5693607">
    <property type="pathway name" value="Processing of DNA double-strand break ends"/>
</dbReference>
<dbReference type="Reactome" id="R-RNO-6804756">
    <property type="pathway name" value="Regulation of TP53 Activity through Phosphorylation"/>
</dbReference>
<dbReference type="Reactome" id="R-RNO-69473">
    <property type="pathway name" value="G2/M DNA damage checkpoint"/>
</dbReference>
<dbReference type="PRO" id="PR:Q499V3"/>
<dbReference type="Proteomes" id="UP000002494">
    <property type="component" value="Chromosome 12"/>
</dbReference>
<dbReference type="Bgee" id="ENSRNOG00000021480">
    <property type="expression patterns" value="Expressed in testis and 19 other cell types or tissues"/>
</dbReference>
<dbReference type="GO" id="GO:0030896">
    <property type="term" value="C:checkpoint clamp complex"/>
    <property type="evidence" value="ECO:0000318"/>
    <property type="project" value="GO_Central"/>
</dbReference>
<dbReference type="GO" id="GO:0005634">
    <property type="term" value="C:nucleus"/>
    <property type="evidence" value="ECO:0000266"/>
    <property type="project" value="RGD"/>
</dbReference>
<dbReference type="GO" id="GO:0071479">
    <property type="term" value="P:cellular response to ionizing radiation"/>
    <property type="evidence" value="ECO:0000318"/>
    <property type="project" value="GO_Central"/>
</dbReference>
<dbReference type="GO" id="GO:0006281">
    <property type="term" value="P:DNA repair"/>
    <property type="evidence" value="ECO:0000318"/>
    <property type="project" value="GO_Central"/>
</dbReference>
<dbReference type="GO" id="GO:0000076">
    <property type="term" value="P:DNA replication checkpoint signaling"/>
    <property type="evidence" value="ECO:0000318"/>
    <property type="project" value="GO_Central"/>
</dbReference>
<dbReference type="GO" id="GO:0031573">
    <property type="term" value="P:mitotic intra-S DNA damage checkpoint signaling"/>
    <property type="evidence" value="ECO:0000318"/>
    <property type="project" value="GO_Central"/>
</dbReference>
<dbReference type="CDD" id="cd00577">
    <property type="entry name" value="PCNA"/>
    <property type="match status" value="1"/>
</dbReference>
<dbReference type="FunFam" id="3.70.10.10:FF:000008">
    <property type="entry name" value="Cell cycle checkpoint control protein"/>
    <property type="match status" value="1"/>
</dbReference>
<dbReference type="Gene3D" id="3.70.10.10">
    <property type="match status" value="1"/>
</dbReference>
<dbReference type="InterPro" id="IPR046938">
    <property type="entry name" value="DNA_clamp_sf"/>
</dbReference>
<dbReference type="InterPro" id="IPR026584">
    <property type="entry name" value="Rad9"/>
</dbReference>
<dbReference type="InterPro" id="IPR007268">
    <property type="entry name" value="Rad9/Ddc1"/>
</dbReference>
<dbReference type="PANTHER" id="PTHR15237:SF2">
    <property type="entry name" value="CELL CYCLE CHECKPOINT CONTROL PROTEIN RAD9B"/>
    <property type="match status" value="1"/>
</dbReference>
<dbReference type="PANTHER" id="PTHR15237">
    <property type="entry name" value="DNA REPAIR PROTEIN RAD9"/>
    <property type="match status" value="1"/>
</dbReference>
<dbReference type="Pfam" id="PF04139">
    <property type="entry name" value="Rad9"/>
    <property type="match status" value="1"/>
</dbReference>
<dbReference type="PIRSF" id="PIRSF009303">
    <property type="entry name" value="Cell_cycle_RAD9"/>
    <property type="match status" value="1"/>
</dbReference>
<dbReference type="SUPFAM" id="SSF55979">
    <property type="entry name" value="DNA clamp"/>
    <property type="match status" value="1"/>
</dbReference>
<name>RAD9B_RAT</name>
<gene>
    <name type="primary">Rad9b</name>
</gene>
<reference key="1">
    <citation type="journal article" date="2004" name="Genome Res.">
        <title>The status, quality, and expansion of the NIH full-length cDNA project: the Mammalian Gene Collection (MGC).</title>
        <authorList>
            <consortium name="The MGC Project Team"/>
        </authorList>
    </citation>
    <scope>NUCLEOTIDE SEQUENCE [LARGE SCALE MRNA]</scope>
    <source>
        <tissue>Prostate</tissue>
    </source>
</reference>
<keyword id="KW-0597">Phosphoprotein</keyword>
<keyword id="KW-1185">Reference proteome</keyword>
<evidence type="ECO:0000250" key="1"/>
<evidence type="ECO:0000250" key="2">
    <source>
        <dbReference type="UniProtKB" id="Q6WBX7"/>
    </source>
</evidence>
<evidence type="ECO:0000256" key="3">
    <source>
        <dbReference type="SAM" id="MobiDB-lite"/>
    </source>
</evidence>
<evidence type="ECO:0000305" key="4"/>
<comment type="subunit">
    <text evidence="1">Interacts with HUS1, HUS1B, RAD1, RAD9A and RAD17.</text>
</comment>
<comment type="similarity">
    <text evidence="4">Belongs to the rad9 family.</text>
</comment>
<feature type="chain" id="PRO_0000226701" description="Cell cycle checkpoint control protein RAD9B">
    <location>
        <begin position="1"/>
        <end position="398"/>
    </location>
</feature>
<feature type="region of interest" description="Disordered" evidence="3">
    <location>
        <begin position="272"/>
        <end position="359"/>
    </location>
</feature>
<feature type="compositionally biased region" description="Polar residues" evidence="3">
    <location>
        <begin position="272"/>
        <end position="281"/>
    </location>
</feature>
<feature type="compositionally biased region" description="Low complexity" evidence="3">
    <location>
        <begin position="324"/>
        <end position="336"/>
    </location>
</feature>
<feature type="modified residue" description="Phosphoserine" evidence="2">
    <location>
        <position position="349"/>
    </location>
</feature>
<feature type="modified residue" description="Phosphoserine" evidence="2">
    <location>
        <position position="358"/>
    </location>
</feature>
<proteinExistence type="evidence at transcript level"/>
<protein>
    <recommendedName>
        <fullName>Cell cycle checkpoint control protein RAD9B</fullName>
    </recommendedName>
    <alternativeName>
        <fullName>DNA repair exonuclease rad9 homolog B</fullName>
    </alternativeName>
</protein>
<accession>Q499V3</accession>
<sequence>MTGGQVKVFGKAIQTLSRVSDELWLDPSEKGLALRSVNSCHSTYGYVLFSSVFFQHYQWSPSATITDSDIPLNLNCKLAIKSILPIFRCLNYLERSIEKCTMVARSDRCRVVIQFFGRHGIKRTHNVYFQDCQPLKILFEKSLCANILMIKPRLLAEAIALLTSNQEEVTFSVTPENFCLKSSSGESLDLTSSVYSEMSFGPEEFDFFQVGLDTEITFCFKELKGILTFSEVMHAPIAIYFDFPGKPVVLSVEDMLLEASFILATLLDYPSRTSSPQSLRLSQARRSDPTLSGAQEGKSRVSQTPESISRAAPKRLFPKDPPDSSSAAETRRASASQDDISEVPESVVSDMEEGQSPSPLRKFSCMFFGAVSCEQQEHANHPLGSLAVASDSEQDASG</sequence>